<feature type="chain" id="PRO_0000171176" description="Manganese import system permease protein ScaB">
    <location>
        <begin position="1"/>
        <end position="278"/>
    </location>
</feature>
<feature type="transmembrane region" description="Helical" evidence="1">
    <location>
        <begin position="18"/>
        <end position="38"/>
    </location>
</feature>
<feature type="transmembrane region" description="Helical" evidence="1">
    <location>
        <begin position="61"/>
        <end position="81"/>
    </location>
</feature>
<feature type="transmembrane region" description="Helical" evidence="1">
    <location>
        <begin position="94"/>
        <end position="114"/>
    </location>
</feature>
<feature type="transmembrane region" description="Helical" evidence="1">
    <location>
        <begin position="134"/>
        <end position="154"/>
    </location>
</feature>
<feature type="transmembrane region" description="Helical" evidence="1">
    <location>
        <begin position="174"/>
        <end position="194"/>
    </location>
</feature>
<feature type="transmembrane region" description="Helical" evidence="1">
    <location>
        <begin position="196"/>
        <end position="216"/>
    </location>
</feature>
<feature type="transmembrane region" description="Helical" evidence="1">
    <location>
        <begin position="222"/>
        <end position="242"/>
    </location>
</feature>
<feature type="transmembrane region" description="Helical" evidence="1">
    <location>
        <begin position="246"/>
        <end position="266"/>
    </location>
</feature>
<evidence type="ECO:0000255" key="1"/>
<evidence type="ECO:0000269" key="2">
    <source>
    </source>
</evidence>
<evidence type="ECO:0000303" key="3">
    <source>
    </source>
</evidence>
<evidence type="ECO:0000303" key="4">
    <source>
    </source>
</evidence>
<evidence type="ECO:0000305" key="5"/>
<reference key="1">
    <citation type="journal article" date="1994" name="Infect. Immun.">
        <title>Nucleotide sequence of the Streptococcus gordonii PK488 coaggregation adhesin gene, scaA, and ATP-binding cassette.</title>
        <authorList>
            <person name="Kolenbrander P.E."/>
            <person name="Andersen R.N."/>
            <person name="Ganeshkumar N."/>
        </authorList>
    </citation>
    <scope>NUCLEOTIDE SEQUENCE [GENOMIC DNA]</scope>
    <source>
        <strain>ATCC 51656 / PK488</strain>
    </source>
</reference>
<reference key="2">
    <citation type="journal article" date="1998" name="J. Bacteriol.">
        <title>The adhesion-associated sca operon in Streptococcus gordonii encodes an inducible high-affinity ABC transporter for Mn2+ uptake.</title>
        <authorList>
            <person name="Kolenbrander P.E."/>
            <person name="Andersen R.N."/>
            <person name="Baker R.A."/>
            <person name="Jenkinson H.F."/>
        </authorList>
    </citation>
    <scope>FUNCTION</scope>
    <source>
        <strain>ATCC 51656 / PK488</strain>
        <strain>Challis / ATCC 35105 / BCRC 15272 / CH1 / DL1 / V288</strain>
    </source>
</reference>
<comment type="function">
    <text evidence="2">Part of the high-affinity ABC transporter complex ScaABC involved in manganese import. Probably responsible for the translocation of the substrate across the membrane. Essential for growth under Mn(2+)-limiting conditions.</text>
</comment>
<comment type="subunit">
    <text evidence="5">The complex is composed of two ATP-binding proteins (ScaC), two transmembrane proteins (ScaB) and a solute-binding protein (ScaA).</text>
</comment>
<comment type="subcellular location">
    <subcellularLocation>
        <location evidence="5">Cell membrane</location>
        <topology evidence="1">Multi-pass membrane protein</topology>
    </subcellularLocation>
</comment>
<comment type="similarity">
    <text evidence="5">Belongs to the ABC-3 integral membrane protein family.</text>
</comment>
<accession>P42361</accession>
<sequence length="278" mass="29705">MIQEFIQGLHDFHFLQNALITAIVIGVVAGAVGCFIILRGMSLMGDAISHAVLPGVALSFILGINFFIGAITFGLLASIIITYIKGNSIIKSDTAIGITFSSFLALGIILISVAKSSTDLFHILFGNILAVQDLDMWISIGVGILVLLVISIFFKQLLLTSFDPLLAQAMGMKVNFYHYLLMILLTLVSVTAMQSVGTILIVAMLITPAATAYLYAKSLKTMILLSSALGAGASVLGLFIGYSFNVAAGSSIVLTSALIFLVSFFIAPKQRYLKRKVK</sequence>
<dbReference type="EMBL" id="L11577">
    <property type="protein sequence ID" value="AAA71946.1"/>
    <property type="molecule type" value="Genomic_DNA"/>
</dbReference>
<dbReference type="PIR" id="T11550">
    <property type="entry name" value="T11550"/>
</dbReference>
<dbReference type="RefSeq" id="WP_045504337.1">
    <property type="nucleotide sequence ID" value="NZ_RJVY01000008.1"/>
</dbReference>
<dbReference type="SMR" id="P42361"/>
<dbReference type="TCDB" id="3.A.1.15.2">
    <property type="family name" value="the atp-binding cassette (abc) superfamily"/>
</dbReference>
<dbReference type="GO" id="GO:0043190">
    <property type="term" value="C:ATP-binding cassette (ABC) transporter complex"/>
    <property type="evidence" value="ECO:0007669"/>
    <property type="project" value="InterPro"/>
</dbReference>
<dbReference type="GO" id="GO:0010043">
    <property type="term" value="P:response to zinc ion"/>
    <property type="evidence" value="ECO:0007669"/>
    <property type="project" value="TreeGrafter"/>
</dbReference>
<dbReference type="GO" id="GO:0055085">
    <property type="term" value="P:transmembrane transport"/>
    <property type="evidence" value="ECO:0007669"/>
    <property type="project" value="InterPro"/>
</dbReference>
<dbReference type="CDD" id="cd06550">
    <property type="entry name" value="TM_ABC_iron-siderophores_like"/>
    <property type="match status" value="1"/>
</dbReference>
<dbReference type="FunFam" id="1.10.3470.10:FF:000003">
    <property type="entry name" value="Iron ABC transporter permease SitD"/>
    <property type="match status" value="1"/>
</dbReference>
<dbReference type="Gene3D" id="1.10.3470.10">
    <property type="entry name" value="ABC transporter involved in vitamin B12 uptake, BtuC"/>
    <property type="match status" value="1"/>
</dbReference>
<dbReference type="InterPro" id="IPR037294">
    <property type="entry name" value="ABC_BtuC-like"/>
</dbReference>
<dbReference type="InterPro" id="IPR001626">
    <property type="entry name" value="ABC_TroCD"/>
</dbReference>
<dbReference type="NCBIfam" id="NF040927">
    <property type="entry name" value="ABC_perm_SloB"/>
    <property type="match status" value="1"/>
</dbReference>
<dbReference type="PANTHER" id="PTHR30477">
    <property type="entry name" value="ABC-TRANSPORTER METAL-BINDING PROTEIN"/>
    <property type="match status" value="1"/>
</dbReference>
<dbReference type="PANTHER" id="PTHR30477:SF13">
    <property type="entry name" value="IRON TRANSPORT SYSTEM MEMBRANE PROTEIN HI_0360-RELATED"/>
    <property type="match status" value="1"/>
</dbReference>
<dbReference type="Pfam" id="PF00950">
    <property type="entry name" value="ABC-3"/>
    <property type="match status" value="1"/>
</dbReference>
<dbReference type="SUPFAM" id="SSF81345">
    <property type="entry name" value="ABC transporter involved in vitamin B12 uptake, BtuC"/>
    <property type="match status" value="1"/>
</dbReference>
<gene>
    <name evidence="4" type="primary">scaB</name>
</gene>
<proteinExistence type="inferred from homology"/>
<keyword id="KW-1003">Cell membrane</keyword>
<keyword id="KW-0464">Manganese</keyword>
<keyword id="KW-0472">Membrane</keyword>
<keyword id="KW-0812">Transmembrane</keyword>
<keyword id="KW-1133">Transmembrane helix</keyword>
<keyword id="KW-0813">Transport</keyword>
<protein>
    <recommendedName>
        <fullName evidence="5">Manganese import system permease protein ScaB</fullName>
    </recommendedName>
    <alternativeName>
        <fullName evidence="3">ORF2</fullName>
    </alternativeName>
</protein>
<name>MTSB_STRGN</name>
<organism>
    <name type="scientific">Streptococcus gordonii</name>
    <dbReference type="NCBI Taxonomy" id="1302"/>
    <lineage>
        <taxon>Bacteria</taxon>
        <taxon>Bacillati</taxon>
        <taxon>Bacillota</taxon>
        <taxon>Bacilli</taxon>
        <taxon>Lactobacillales</taxon>
        <taxon>Streptococcaceae</taxon>
        <taxon>Streptococcus</taxon>
    </lineage>
</organism>